<reference key="1">
    <citation type="submission" date="2008-10" db="EMBL/GenBank/DDBJ databases">
        <title>Complete sequence of Desulfovibrio vulgaris str. 'Miyazaki F'.</title>
        <authorList>
            <person name="Lucas S."/>
            <person name="Copeland A."/>
            <person name="Lapidus A."/>
            <person name="Glavina del Rio T."/>
            <person name="Dalin E."/>
            <person name="Tice H."/>
            <person name="Bruce D."/>
            <person name="Goodwin L."/>
            <person name="Pitluck S."/>
            <person name="Sims D."/>
            <person name="Brettin T."/>
            <person name="Detter J.C."/>
            <person name="Han C."/>
            <person name="Larimer F."/>
            <person name="Land M."/>
            <person name="Hauser L."/>
            <person name="Kyrpides N."/>
            <person name="Mikhailova N."/>
            <person name="Hazen T.C."/>
            <person name="Richardson P."/>
        </authorList>
    </citation>
    <scope>NUCLEOTIDE SEQUENCE [LARGE SCALE GENOMIC DNA]</scope>
    <source>
        <strain>DSM 19637 / Miyazaki F</strain>
    </source>
</reference>
<proteinExistence type="inferred from homology"/>
<gene>
    <name evidence="1" type="primary">mtnA</name>
    <name type="ordered locus">DvMF_2235</name>
</gene>
<evidence type="ECO:0000255" key="1">
    <source>
        <dbReference type="HAMAP-Rule" id="MF_01678"/>
    </source>
</evidence>
<evidence type="ECO:0000305" key="2"/>
<comment type="function">
    <text evidence="1">Catalyzes the interconversion of methylthioribose-1-phosphate (MTR-1-P) into methylthioribulose-1-phosphate (MTRu-1-P).</text>
</comment>
<comment type="catalytic activity">
    <reaction evidence="1">
        <text>5-(methylsulfanyl)-alpha-D-ribose 1-phosphate = 5-(methylsulfanyl)-D-ribulose 1-phosphate</text>
        <dbReference type="Rhea" id="RHEA:19989"/>
        <dbReference type="ChEBI" id="CHEBI:58533"/>
        <dbReference type="ChEBI" id="CHEBI:58548"/>
        <dbReference type="EC" id="5.3.1.23"/>
    </reaction>
</comment>
<comment type="pathway">
    <text evidence="1">Amino-acid biosynthesis; L-methionine biosynthesis via salvage pathway; L-methionine from S-methyl-5-thio-alpha-D-ribose 1-phosphate: step 1/6.</text>
</comment>
<comment type="similarity">
    <text evidence="2">Belongs to the eIF-2B alpha/beta/delta subunits family. MtnA subfamily.</text>
</comment>
<feature type="chain" id="PRO_1000187356" description="Methylthioribose-1-phosphate isomerase">
    <location>
        <begin position="1"/>
        <end position="350"/>
    </location>
</feature>
<feature type="active site" description="Proton donor" evidence="1">
    <location>
        <position position="237"/>
    </location>
</feature>
<feature type="binding site" evidence="1">
    <location>
        <begin position="47"/>
        <end position="49"/>
    </location>
    <ligand>
        <name>substrate</name>
    </ligand>
</feature>
<feature type="binding site" evidence="1">
    <location>
        <position position="89"/>
    </location>
    <ligand>
        <name>substrate</name>
    </ligand>
</feature>
<feature type="binding site" evidence="1">
    <location>
        <position position="196"/>
    </location>
    <ligand>
        <name>substrate</name>
    </ligand>
</feature>
<feature type="binding site" evidence="1">
    <location>
        <begin position="247"/>
        <end position="248"/>
    </location>
    <ligand>
        <name>substrate</name>
    </ligand>
</feature>
<feature type="site" description="Transition state stabilizer" evidence="1">
    <location>
        <position position="157"/>
    </location>
</feature>
<accession>B8DQQ9</accession>
<protein>
    <recommendedName>
        <fullName evidence="1">Methylthioribose-1-phosphate isomerase</fullName>
        <shortName evidence="1">M1Pi</shortName>
        <shortName evidence="1">MTR-1-P isomerase</shortName>
        <ecNumber evidence="1">5.3.1.23</ecNumber>
    </recommendedName>
    <alternativeName>
        <fullName evidence="1">S-methyl-5-thioribose-1-phosphate isomerase</fullName>
    </alternativeName>
</protein>
<sequence>MEHHIRYDAAQRALILLDQRLLPTRQEDFVCRTTEDIVTALQVMVVRGAPAIGVTAAWGCVLAAYEAAEAGDHWHPVLDGLLERIAKARPTAVNLRWAVDRMRKVWKTAGHAPFATLISLWESEARRIHRDDIEINRAMGRHGAALIDEGDTVMTHCNAGALATAGYGTALGVIRGAVDAGKKISVIANETRPFLQGARLTAYELHEDHIPVTVACDNACGHLMRKGMVQKVVVGADRIAANGDAANKIGTYSVALLAREHGVPFYVAAPLSTIDRNTPDGDHIPIEDRTPREVTHVGDTQITPDGVPVYNFAFDVTPAALIAGIVTEVGVLRPPYTESIAEAFRKAGLE</sequence>
<dbReference type="EC" id="5.3.1.23" evidence="1"/>
<dbReference type="EMBL" id="CP001197">
    <property type="protein sequence ID" value="ACL09178.1"/>
    <property type="molecule type" value="Genomic_DNA"/>
</dbReference>
<dbReference type="SMR" id="B8DQQ9"/>
<dbReference type="STRING" id="883.DvMF_2235"/>
<dbReference type="KEGG" id="dvm:DvMF_2235"/>
<dbReference type="eggNOG" id="COG0182">
    <property type="taxonomic scope" value="Bacteria"/>
</dbReference>
<dbReference type="HOGENOM" id="CLU_016218_1_2_7"/>
<dbReference type="OrthoDB" id="9803436at2"/>
<dbReference type="UniPathway" id="UPA00904">
    <property type="reaction ID" value="UER00874"/>
</dbReference>
<dbReference type="GO" id="GO:0046523">
    <property type="term" value="F:S-methyl-5-thioribose-1-phosphate isomerase activity"/>
    <property type="evidence" value="ECO:0007669"/>
    <property type="project" value="UniProtKB-UniRule"/>
</dbReference>
<dbReference type="GO" id="GO:0019509">
    <property type="term" value="P:L-methionine salvage from methylthioadenosine"/>
    <property type="evidence" value="ECO:0007669"/>
    <property type="project" value="UniProtKB-UniRule"/>
</dbReference>
<dbReference type="FunFam" id="1.20.120.420:FF:000003">
    <property type="entry name" value="Methylthioribose-1-phosphate isomerase"/>
    <property type="match status" value="1"/>
</dbReference>
<dbReference type="FunFam" id="3.40.50.10470:FF:000006">
    <property type="entry name" value="Methylthioribose-1-phosphate isomerase"/>
    <property type="match status" value="1"/>
</dbReference>
<dbReference type="Gene3D" id="1.20.120.420">
    <property type="entry name" value="translation initiation factor eif-2b, domain 1"/>
    <property type="match status" value="1"/>
</dbReference>
<dbReference type="Gene3D" id="3.40.50.10470">
    <property type="entry name" value="Translation initiation factor eif-2b, domain 2"/>
    <property type="match status" value="1"/>
</dbReference>
<dbReference type="HAMAP" id="MF_01678">
    <property type="entry name" value="Salvage_MtnA"/>
    <property type="match status" value="1"/>
</dbReference>
<dbReference type="InterPro" id="IPR000649">
    <property type="entry name" value="IF-2B-related"/>
</dbReference>
<dbReference type="InterPro" id="IPR005251">
    <property type="entry name" value="IF-M1Pi"/>
</dbReference>
<dbReference type="InterPro" id="IPR042529">
    <property type="entry name" value="IF_2B-like_C"/>
</dbReference>
<dbReference type="InterPro" id="IPR011559">
    <property type="entry name" value="Initiation_fac_2B_a/b/d"/>
</dbReference>
<dbReference type="InterPro" id="IPR027363">
    <property type="entry name" value="M1Pi_N"/>
</dbReference>
<dbReference type="InterPro" id="IPR037171">
    <property type="entry name" value="NagB/RpiA_transferase-like"/>
</dbReference>
<dbReference type="NCBIfam" id="TIGR00524">
    <property type="entry name" value="eIF-2B_rel"/>
    <property type="match status" value="1"/>
</dbReference>
<dbReference type="NCBIfam" id="NF004326">
    <property type="entry name" value="PRK05720.1"/>
    <property type="match status" value="1"/>
</dbReference>
<dbReference type="NCBIfam" id="TIGR00512">
    <property type="entry name" value="salvage_mtnA"/>
    <property type="match status" value="1"/>
</dbReference>
<dbReference type="PANTHER" id="PTHR43475">
    <property type="entry name" value="METHYLTHIORIBOSE-1-PHOSPHATE ISOMERASE"/>
    <property type="match status" value="1"/>
</dbReference>
<dbReference type="PANTHER" id="PTHR43475:SF1">
    <property type="entry name" value="METHYLTHIORIBOSE-1-PHOSPHATE ISOMERASE"/>
    <property type="match status" value="1"/>
</dbReference>
<dbReference type="Pfam" id="PF01008">
    <property type="entry name" value="IF-2B"/>
    <property type="match status" value="1"/>
</dbReference>
<dbReference type="SUPFAM" id="SSF100950">
    <property type="entry name" value="NagB/RpiA/CoA transferase-like"/>
    <property type="match status" value="1"/>
</dbReference>
<organism>
    <name type="scientific">Nitratidesulfovibrio vulgaris (strain DSM 19637 / Miyazaki F)</name>
    <name type="common">Desulfovibrio vulgaris</name>
    <dbReference type="NCBI Taxonomy" id="883"/>
    <lineage>
        <taxon>Bacteria</taxon>
        <taxon>Pseudomonadati</taxon>
        <taxon>Thermodesulfobacteriota</taxon>
        <taxon>Desulfovibrionia</taxon>
        <taxon>Desulfovibrionales</taxon>
        <taxon>Desulfovibrionaceae</taxon>
        <taxon>Nitratidesulfovibrio</taxon>
    </lineage>
</organism>
<keyword id="KW-0028">Amino-acid biosynthesis</keyword>
<keyword id="KW-0413">Isomerase</keyword>
<keyword id="KW-0486">Methionine biosynthesis</keyword>
<name>MTNA_NITV9</name>